<accession>P84268</accession>
<name>DAH52_RANDH</name>
<organism>
    <name type="scientific">Ranoidea dahlii</name>
    <name type="common">Dahl's aquatic frog</name>
    <name type="synonym">Litoria dahlii</name>
    <dbReference type="NCBI Taxonomy" id="299727"/>
    <lineage>
        <taxon>Eukaryota</taxon>
        <taxon>Metazoa</taxon>
        <taxon>Chordata</taxon>
        <taxon>Craniata</taxon>
        <taxon>Vertebrata</taxon>
        <taxon>Euteleostomi</taxon>
        <taxon>Amphibia</taxon>
        <taxon>Batrachia</taxon>
        <taxon>Anura</taxon>
        <taxon>Neobatrachia</taxon>
        <taxon>Hyloidea</taxon>
        <taxon>Hylidae</taxon>
        <taxon>Pelodryadinae</taxon>
        <taxon>Ranoidea</taxon>
    </lineage>
</organism>
<reference evidence="2" key="1">
    <citation type="journal article" date="2001" name="Rapid Commun. Mass Spectrom.">
        <title>Bioactive dahlein peptides from the skin secretions of the Australian aquatic frog Litoria dahlii: sequence determination by electrospray mass spectrometry.</title>
        <authorList>
            <person name="Wegener K.L."/>
            <person name="Brinkworth C.S."/>
            <person name="Bowie J.H."/>
            <person name="Wallace J.C."/>
            <person name="Tyler M.J."/>
        </authorList>
    </citation>
    <scope>PROTEIN SEQUENCE</scope>
    <scope>FUNCTION</scope>
    <scope>SUBCELLULAR LOCATION</scope>
    <scope>TISSUE SPECIFICITY</scope>
    <scope>MASS SPECTROMETRY</scope>
    <source>
        <tissue evidence="1">Skin secretion</tissue>
    </source>
</reference>
<feature type="peptide" id="PRO_0000043778" description="Dahlein-5.2">
    <location>
        <begin position="1"/>
        <end position="21"/>
    </location>
</feature>
<proteinExistence type="evidence at protein level"/>
<evidence type="ECO:0000269" key="1">
    <source>
    </source>
</evidence>
<evidence type="ECO:0000305" key="2"/>
<sequence>GLLGSIGNAIGAFIANKLKPK</sequence>
<dbReference type="GO" id="GO:0005576">
    <property type="term" value="C:extracellular region"/>
    <property type="evidence" value="ECO:0000314"/>
    <property type="project" value="UniProtKB"/>
</dbReference>
<dbReference type="GO" id="GO:0030235">
    <property type="term" value="F:nitric-oxide synthase regulator activity"/>
    <property type="evidence" value="ECO:0000314"/>
    <property type="project" value="UniProtKB"/>
</dbReference>
<dbReference type="GO" id="GO:0006952">
    <property type="term" value="P:defense response"/>
    <property type="evidence" value="ECO:0007669"/>
    <property type="project" value="UniProtKB-KW"/>
</dbReference>
<dbReference type="GO" id="GO:0051001">
    <property type="term" value="P:negative regulation of nitric-oxide synthase activity"/>
    <property type="evidence" value="ECO:0000314"/>
    <property type="project" value="UniProtKB"/>
</dbReference>
<keyword id="KW-0878">Amphibian defense peptide</keyword>
<keyword id="KW-0903">Direct protein sequencing</keyword>
<keyword id="KW-0964">Secreted</keyword>
<comment type="function">
    <text evidence="1">Has no antimicrobial activity. Strongly inhibits the formation of NO by neuronal nitric oxide synthase at micromolar concentrations.</text>
</comment>
<comment type="subcellular location">
    <subcellularLocation>
        <location evidence="1">Secreted</location>
    </subcellularLocation>
</comment>
<comment type="tissue specificity">
    <text evidence="1">Expressed by the skin dorsal glands.</text>
</comment>
<comment type="mass spectrometry"/>
<protein>
    <recommendedName>
        <fullName>Dahlein-5.2</fullName>
    </recommendedName>
</protein>